<evidence type="ECO:0000255" key="1"/>
<protein>
    <recommendedName>
        <fullName>Early E3 22.2 kDa glycoprotein</fullName>
    </recommendedName>
</protein>
<accession>P22229</accession>
<reference key="1">
    <citation type="journal article" date="1991" name="Virology">
        <title>Sequence analysis of putative E3 and fiber genomic regions of two strains of canine adenovirus type 1.</title>
        <authorList>
            <person name="Dragulev B.P."/>
            <person name="Sira S."/>
            <person name="Abouhaidar M.G."/>
            <person name="Campbell J.B."/>
        </authorList>
    </citation>
    <scope>NUCLEOTIDE SEQUENCE [GENOMIC DNA]</scope>
</reference>
<keyword id="KW-0244">Early protein</keyword>
<keyword id="KW-0325">Glycoprotein</keyword>
<feature type="chain" id="PRO_0000221768" description="Early E3 22.2 kDa glycoprotein">
    <location>
        <begin position="1"/>
        <end position="195"/>
    </location>
</feature>
<feature type="glycosylation site" description="N-linked (GlcNAc...) asparagine; by host" evidence="1">
    <location>
        <position position="20"/>
    </location>
</feature>
<feature type="glycosylation site" description="N-linked (GlcNAc...) asparagine; by host" evidence="1">
    <location>
        <position position="61"/>
    </location>
</feature>
<feature type="glycosylation site" description="N-linked (GlcNAc...) asparagine; by host" evidence="1">
    <location>
        <position position="76"/>
    </location>
</feature>
<feature type="glycosylation site" description="N-linked (GlcNAc...) asparagine; by host" evidence="1">
    <location>
        <position position="88"/>
    </location>
</feature>
<feature type="glycosylation site" description="N-linked (GlcNAc...) asparagine; by host" evidence="1">
    <location>
        <position position="126"/>
    </location>
</feature>
<feature type="glycosylation site" description="N-linked (GlcNAc...) asparagine; by host" evidence="1">
    <location>
        <position position="139"/>
    </location>
</feature>
<name>E322_ADECG</name>
<organism>
    <name type="scientific">Canine adenovirus serotype 1 (strain Glaxo)</name>
    <name type="common">CAdV-1</name>
    <name type="synonym">Canine adenovirus 1 (strain Glaxo)</name>
    <dbReference type="NCBI Taxonomy" id="10513"/>
    <lineage>
        <taxon>Viruses</taxon>
        <taxon>Varidnaviria</taxon>
        <taxon>Bamfordvirae</taxon>
        <taxon>Preplasmiviricota</taxon>
        <taxon>Tectiliviricetes</taxon>
        <taxon>Rowavirales</taxon>
        <taxon>Adenoviridae</taxon>
        <taxon>Mastadenovirus</taxon>
        <taxon>Canine mastadenovirus A</taxon>
    </lineage>
</organism>
<proteinExistence type="predicted"/>
<dbReference type="EMBL" id="M60937">
    <property type="protein sequence ID" value="AAA42535.1"/>
    <property type="molecule type" value="Genomic_DNA"/>
</dbReference>
<dbReference type="PIR" id="C40318">
    <property type="entry name" value="ERADD2"/>
</dbReference>
<sequence length="195" mass="22233">MRFCFFFFCFTASIFCTTGNSSDIVFCCAHTPCLLHLEVDQETSVTWIDSNTGQIPLCLSNGTCHISEKGLHFSANFSKDGLYIAIINETNYHAAEHYYLVYIYENCHQMPYDSPRHTGHKGTSFNWSMGLWLVKCSHNKTFFLPFVLDSAKSAPIIMTETAITIYISMIFLIVSLLTFLNVLITLNNKYKHYGV</sequence>
<organismHost>
    <name type="scientific">Canis lupus familiaris</name>
    <name type="common">Dog</name>
    <name type="synonym">Canis familiaris</name>
    <dbReference type="NCBI Taxonomy" id="9615"/>
</organismHost>